<comment type="similarity">
    <text evidence="1">Belongs to the universal ribosomal protein uS2 family.</text>
</comment>
<evidence type="ECO:0000255" key="1">
    <source>
        <dbReference type="HAMAP-Rule" id="MF_00291"/>
    </source>
</evidence>
<evidence type="ECO:0000256" key="2">
    <source>
        <dbReference type="SAM" id="MobiDB-lite"/>
    </source>
</evidence>
<evidence type="ECO:0000305" key="3"/>
<sequence length="265" mass="29235">MPQVTMRQMLEAGVHFGHQTRYWNPKMAPYIFGARGKIHIINLEKTVPLFNDAMNFLSSVAQKRGTVLFLGTKRSARESIKEEAERCNMPFMTQRWLGGTLTNFRTVKQSVARLKELEAAETDGTFDKLVKHEVLGLRREREKLDASLGGIKEMNRLPDAIFVIDIGHEDIAIKEAKKLGIPVIAVVDTNYDPALVDYAIPGNDDAIRAVQLYARAAADAVLEGKAAAPNSASVREEEFSADAADEGKGRRAPAKKGDKKADAAE</sequence>
<feature type="chain" id="PRO_0000134278" description="Small ribosomal subunit protein uS2">
    <location>
        <begin position="1"/>
        <end position="265"/>
    </location>
</feature>
<feature type="region of interest" description="Disordered" evidence="2">
    <location>
        <begin position="226"/>
        <end position="265"/>
    </location>
</feature>
<feature type="compositionally biased region" description="Basic and acidic residues" evidence="2">
    <location>
        <begin position="245"/>
        <end position="265"/>
    </location>
</feature>
<keyword id="KW-0687">Ribonucleoprotein</keyword>
<keyword id="KW-0689">Ribosomal protein</keyword>
<gene>
    <name evidence="1" type="primary">rpsB</name>
    <name type="ordered locus">XAC1422</name>
</gene>
<dbReference type="EMBL" id="AE008923">
    <property type="protein sequence ID" value="AAM36293.1"/>
    <property type="molecule type" value="Genomic_DNA"/>
</dbReference>
<dbReference type="RefSeq" id="WP_005911732.1">
    <property type="nucleotide sequence ID" value="NC_003919.1"/>
</dbReference>
<dbReference type="SMR" id="Q8PMK5"/>
<dbReference type="GeneID" id="66910589"/>
<dbReference type="KEGG" id="xac:XAC1422"/>
<dbReference type="eggNOG" id="COG0052">
    <property type="taxonomic scope" value="Bacteria"/>
</dbReference>
<dbReference type="HOGENOM" id="CLU_040318_1_2_6"/>
<dbReference type="Proteomes" id="UP000000576">
    <property type="component" value="Chromosome"/>
</dbReference>
<dbReference type="GO" id="GO:0022627">
    <property type="term" value="C:cytosolic small ribosomal subunit"/>
    <property type="evidence" value="ECO:0007669"/>
    <property type="project" value="TreeGrafter"/>
</dbReference>
<dbReference type="GO" id="GO:0003735">
    <property type="term" value="F:structural constituent of ribosome"/>
    <property type="evidence" value="ECO:0007669"/>
    <property type="project" value="InterPro"/>
</dbReference>
<dbReference type="GO" id="GO:0006412">
    <property type="term" value="P:translation"/>
    <property type="evidence" value="ECO:0007669"/>
    <property type="project" value="UniProtKB-UniRule"/>
</dbReference>
<dbReference type="CDD" id="cd01425">
    <property type="entry name" value="RPS2"/>
    <property type="match status" value="1"/>
</dbReference>
<dbReference type="FunFam" id="1.10.287.610:FF:000001">
    <property type="entry name" value="30S ribosomal protein S2"/>
    <property type="match status" value="1"/>
</dbReference>
<dbReference type="Gene3D" id="3.40.50.10490">
    <property type="entry name" value="Glucose-6-phosphate isomerase like protein, domain 1"/>
    <property type="match status" value="1"/>
</dbReference>
<dbReference type="Gene3D" id="1.10.287.610">
    <property type="entry name" value="Helix hairpin bin"/>
    <property type="match status" value="1"/>
</dbReference>
<dbReference type="HAMAP" id="MF_00291_B">
    <property type="entry name" value="Ribosomal_uS2_B"/>
    <property type="match status" value="1"/>
</dbReference>
<dbReference type="InterPro" id="IPR001865">
    <property type="entry name" value="Ribosomal_uS2"/>
</dbReference>
<dbReference type="InterPro" id="IPR005706">
    <property type="entry name" value="Ribosomal_uS2_bac/mit/plastid"/>
</dbReference>
<dbReference type="InterPro" id="IPR018130">
    <property type="entry name" value="Ribosomal_uS2_CS"/>
</dbReference>
<dbReference type="InterPro" id="IPR023591">
    <property type="entry name" value="Ribosomal_uS2_flav_dom_sf"/>
</dbReference>
<dbReference type="NCBIfam" id="TIGR01011">
    <property type="entry name" value="rpsB_bact"/>
    <property type="match status" value="1"/>
</dbReference>
<dbReference type="PANTHER" id="PTHR12534">
    <property type="entry name" value="30S RIBOSOMAL PROTEIN S2 PROKARYOTIC AND ORGANELLAR"/>
    <property type="match status" value="1"/>
</dbReference>
<dbReference type="PANTHER" id="PTHR12534:SF0">
    <property type="entry name" value="SMALL RIBOSOMAL SUBUNIT PROTEIN US2M"/>
    <property type="match status" value="1"/>
</dbReference>
<dbReference type="Pfam" id="PF00318">
    <property type="entry name" value="Ribosomal_S2"/>
    <property type="match status" value="1"/>
</dbReference>
<dbReference type="PRINTS" id="PR00395">
    <property type="entry name" value="RIBOSOMALS2"/>
</dbReference>
<dbReference type="SUPFAM" id="SSF52313">
    <property type="entry name" value="Ribosomal protein S2"/>
    <property type="match status" value="1"/>
</dbReference>
<dbReference type="PROSITE" id="PS00962">
    <property type="entry name" value="RIBOSOMAL_S2_1"/>
    <property type="match status" value="1"/>
</dbReference>
<dbReference type="PROSITE" id="PS00963">
    <property type="entry name" value="RIBOSOMAL_S2_2"/>
    <property type="match status" value="1"/>
</dbReference>
<reference key="1">
    <citation type="journal article" date="2002" name="Nature">
        <title>Comparison of the genomes of two Xanthomonas pathogens with differing host specificities.</title>
        <authorList>
            <person name="da Silva A.C.R."/>
            <person name="Ferro J.A."/>
            <person name="Reinach F.C."/>
            <person name="Farah C.S."/>
            <person name="Furlan L.R."/>
            <person name="Quaggio R.B."/>
            <person name="Monteiro-Vitorello C.B."/>
            <person name="Van Sluys M.A."/>
            <person name="Almeida N.F. Jr."/>
            <person name="Alves L.M.C."/>
            <person name="do Amaral A.M."/>
            <person name="Bertolini M.C."/>
            <person name="Camargo L.E.A."/>
            <person name="Camarotte G."/>
            <person name="Cannavan F."/>
            <person name="Cardozo J."/>
            <person name="Chambergo F."/>
            <person name="Ciapina L.P."/>
            <person name="Cicarelli R.M.B."/>
            <person name="Coutinho L.L."/>
            <person name="Cursino-Santos J.R."/>
            <person name="El-Dorry H."/>
            <person name="Faria J.B."/>
            <person name="Ferreira A.J.S."/>
            <person name="Ferreira R.C.C."/>
            <person name="Ferro M.I.T."/>
            <person name="Formighieri E.F."/>
            <person name="Franco M.C."/>
            <person name="Greggio C.C."/>
            <person name="Gruber A."/>
            <person name="Katsuyama A.M."/>
            <person name="Kishi L.T."/>
            <person name="Leite R.P."/>
            <person name="Lemos E.G.M."/>
            <person name="Lemos M.V.F."/>
            <person name="Locali E.C."/>
            <person name="Machado M.A."/>
            <person name="Madeira A.M.B.N."/>
            <person name="Martinez-Rossi N.M."/>
            <person name="Martins E.C."/>
            <person name="Meidanis J."/>
            <person name="Menck C.F.M."/>
            <person name="Miyaki C.Y."/>
            <person name="Moon D.H."/>
            <person name="Moreira L.M."/>
            <person name="Novo M.T.M."/>
            <person name="Okura V.K."/>
            <person name="Oliveira M.C."/>
            <person name="Oliveira V.R."/>
            <person name="Pereira H.A."/>
            <person name="Rossi A."/>
            <person name="Sena J.A.D."/>
            <person name="Silva C."/>
            <person name="de Souza R.F."/>
            <person name="Spinola L.A.F."/>
            <person name="Takita M.A."/>
            <person name="Tamura R.E."/>
            <person name="Teixeira E.C."/>
            <person name="Tezza R.I.D."/>
            <person name="Trindade dos Santos M."/>
            <person name="Truffi D."/>
            <person name="Tsai S.M."/>
            <person name="White F.F."/>
            <person name="Setubal J.C."/>
            <person name="Kitajima J.P."/>
        </authorList>
    </citation>
    <scope>NUCLEOTIDE SEQUENCE [LARGE SCALE GENOMIC DNA]</scope>
    <source>
        <strain>306</strain>
    </source>
</reference>
<accession>Q8PMK5</accession>
<protein>
    <recommendedName>
        <fullName evidence="1">Small ribosomal subunit protein uS2</fullName>
    </recommendedName>
    <alternativeName>
        <fullName evidence="3">30S ribosomal protein S2</fullName>
    </alternativeName>
</protein>
<organism>
    <name type="scientific">Xanthomonas axonopodis pv. citri (strain 306)</name>
    <dbReference type="NCBI Taxonomy" id="190486"/>
    <lineage>
        <taxon>Bacteria</taxon>
        <taxon>Pseudomonadati</taxon>
        <taxon>Pseudomonadota</taxon>
        <taxon>Gammaproteobacteria</taxon>
        <taxon>Lysobacterales</taxon>
        <taxon>Lysobacteraceae</taxon>
        <taxon>Xanthomonas</taxon>
    </lineage>
</organism>
<name>RS2_XANAC</name>
<proteinExistence type="inferred from homology"/>